<evidence type="ECO:0000250" key="1"/>
<evidence type="ECO:0000305" key="2"/>
<comment type="catalytic activity">
    <reaction>
        <text>L-tryptophan + O2 = indole-3-acetamide + CO2 + H2O</text>
        <dbReference type="Rhea" id="RHEA:16165"/>
        <dbReference type="ChEBI" id="CHEBI:15377"/>
        <dbReference type="ChEBI" id="CHEBI:15379"/>
        <dbReference type="ChEBI" id="CHEBI:16031"/>
        <dbReference type="ChEBI" id="CHEBI:16526"/>
        <dbReference type="ChEBI" id="CHEBI:57912"/>
        <dbReference type="EC" id="1.13.12.3"/>
    </reaction>
</comment>
<comment type="cofactor">
    <cofactor evidence="1">
        <name>FMN</name>
        <dbReference type="ChEBI" id="CHEBI:58210"/>
    </cofactor>
    <text evidence="1">Binds 1 FMN per subunit.</text>
</comment>
<comment type="pathway">
    <text>Plant hormone metabolism; auxin biosynthesis.</text>
</comment>
<comment type="similarity">
    <text evidence="2">Belongs to the tryptophan 2-monooxygenase family.</text>
</comment>
<name>TR2M_RHIRH</name>
<reference key="1">
    <citation type="journal article" date="1991" name="Mol. Plant Microbe Interact.">
        <title>The TR-DNA region carrying the auxin synthesis genes of the Agrobacterium rhizogenes agropine-type plasmid pRiA4: nucleotide sequence analysis and introduction into tobacco plants.</title>
        <authorList>
            <person name="Camilleri C."/>
            <person name="Jouanin L."/>
        </authorList>
    </citation>
    <scope>NUCLEOTIDE SEQUENCE [GENOMIC DNA]</scope>
    <source>
        <strain>A4</strain>
    </source>
</reference>
<reference key="2">
    <citation type="journal article" date="1993" name="Mol. Gen. Genet.">
        <title>Multiple regions of a divergent promoter control the expression of the Agrobacterium rhizogenes aux1 and aux2 plant oncogenes.</title>
        <authorList>
            <person name="Gaudin V."/>
            <person name="Camilleri C."/>
            <person name="Jouanin L."/>
        </authorList>
    </citation>
    <scope>NUCLEOTIDE SEQUENCE [GENOMIC DNA] OF 1-12</scope>
    <source>
        <strain>A4</strain>
    </source>
</reference>
<geneLocation type="plasmid">
    <name>pRiA4</name>
</geneLocation>
<keyword id="KW-0073">Auxin biosynthesis</keyword>
<keyword id="KW-0285">Flavoprotein</keyword>
<keyword id="KW-0288">FMN</keyword>
<keyword id="KW-0503">Monooxygenase</keyword>
<keyword id="KW-0560">Oxidoreductase</keyword>
<keyword id="KW-0614">Plasmid</keyword>
<sequence>MAGSSFTLPSTGSAPLDMMLIDDSDLLQLGLQQVFSKRYTETPQSRYKLTRRASPDVSSGEGNVHALAFIYVNAETLQMIKNARSLTEANGVKDLVAIDVPPFRNDFSRALLLQVINLLGNNRNADDDLSHFIAVALPNSARSKILTTAPFEGSLSENFRGFPITREGNVACEVLAYGNNLMPKACSDSFPTVDLLYDYGKFFESCAADGRIGYFPEGVTKPKVAIIGAGFSGLVAASELLHAGVDDVTVYEASDRLGGKLWSHGFKSAPNVIAEMGAMRFPRSESCLFFYLKKHGLDSVGLFPNPGSVDTALFYRGRQYIWKAGEEPPELFRRVHHGWRAFLQDGYLHDGVMLASPLAIVDALNLGHLQQAHGFWQSWLTYFERESFSSGIEKMFLGNHPPGGEQWNSLDDLDLFKALGIGSGGFGPVFESGFIEILRLVVNGYEDNVRLSYEGISELPHRIASQVINGRSIRERTIHVQVEQIDREEDKINIKIKGGKVEVYDRVLVTSGFANIEMRHLLTSSNAFFHADVSHAIGNSHMTGASKLFLLTNEKFWLQHHLPSCILTTGVAKAVYCLDYDPRDPSGKGLVLISYTWEDDSHKLLAVPDKRERFASLQRDIGRAFPDFAKHLTPADGNYDDNIVQHDWLTDPHAGGAFKLNRRGNDVYSERLFFQPFDVMHPADDKGLYLAGCSCSFTGGWVHGAIQTACNATCAIIYGSGHLQELIHWRHLKEGNPLAHAWKRYRYQA</sequence>
<proteinExistence type="inferred from homology"/>
<feature type="chain" id="PRO_0000065585" description="Tryptophan 2-monooxygenase">
    <location>
        <begin position="1"/>
        <end position="749"/>
    </location>
</feature>
<feature type="binding site" evidence="1">
    <location>
        <position position="232"/>
    </location>
    <ligand>
        <name>FMN</name>
        <dbReference type="ChEBI" id="CHEBI:58210"/>
    </ligand>
</feature>
<feature type="binding site" evidence="1">
    <location>
        <position position="252"/>
    </location>
    <ligand>
        <name>FMN</name>
        <dbReference type="ChEBI" id="CHEBI:58210"/>
    </ligand>
</feature>
<feature type="binding site" evidence="1">
    <location>
        <position position="260"/>
    </location>
    <ligand>
        <name>FMN</name>
        <dbReference type="ChEBI" id="CHEBI:58210"/>
    </ligand>
</feature>
<feature type="binding site" evidence="1">
    <location>
        <position position="280"/>
    </location>
    <ligand>
        <name>FMN</name>
        <dbReference type="ChEBI" id="CHEBI:58210"/>
    </ligand>
</feature>
<feature type="binding site" evidence="1">
    <location>
        <position position="280"/>
    </location>
    <ligand>
        <name>substrate</name>
    </ligand>
</feature>
<gene>
    <name type="primary">aux1</name>
</gene>
<accession>Q09109</accession>
<accession>Q841R5</accession>
<dbReference type="EC" id="1.13.12.3"/>
<dbReference type="EMBL" id="M61151">
    <property type="protein sequence ID" value="AAA22080.1"/>
    <property type="molecule type" value="Genomic_DNA"/>
</dbReference>
<dbReference type="EMBL" id="S62276">
    <property type="protein sequence ID" value="AAP13934.1"/>
    <property type="molecule type" value="Genomic_DNA"/>
</dbReference>
<dbReference type="PIR" id="I39708">
    <property type="entry name" value="I39708"/>
</dbReference>
<dbReference type="SMR" id="Q09109"/>
<dbReference type="eggNOG" id="COG1231">
    <property type="taxonomic scope" value="Bacteria"/>
</dbReference>
<dbReference type="UniPathway" id="UPA00151"/>
<dbReference type="GO" id="GO:0001716">
    <property type="term" value="F:L-amino-acid oxidase activity"/>
    <property type="evidence" value="ECO:0007669"/>
    <property type="project" value="TreeGrafter"/>
</dbReference>
<dbReference type="GO" id="GO:0050361">
    <property type="term" value="F:tryptophan 2-monooxygenase activity"/>
    <property type="evidence" value="ECO:0007669"/>
    <property type="project" value="UniProtKB-EC"/>
</dbReference>
<dbReference type="GO" id="GO:0009063">
    <property type="term" value="P:amino acid catabolic process"/>
    <property type="evidence" value="ECO:0007669"/>
    <property type="project" value="TreeGrafter"/>
</dbReference>
<dbReference type="GO" id="GO:0009851">
    <property type="term" value="P:auxin biosynthetic process"/>
    <property type="evidence" value="ECO:0007669"/>
    <property type="project" value="UniProtKB-UniPathway"/>
</dbReference>
<dbReference type="Gene3D" id="1.10.405.40">
    <property type="match status" value="1"/>
</dbReference>
<dbReference type="Gene3D" id="3.90.660.10">
    <property type="match status" value="1"/>
</dbReference>
<dbReference type="Gene3D" id="3.50.50.60">
    <property type="entry name" value="FAD/NAD(P)-binding domain"/>
    <property type="match status" value="1"/>
</dbReference>
<dbReference type="InterPro" id="IPR002937">
    <property type="entry name" value="Amino_oxidase"/>
</dbReference>
<dbReference type="InterPro" id="IPR036188">
    <property type="entry name" value="FAD/NAD-bd_sf"/>
</dbReference>
<dbReference type="InterPro" id="IPR050281">
    <property type="entry name" value="Flavin_monoamine_oxidase"/>
</dbReference>
<dbReference type="InterPro" id="IPR006064">
    <property type="entry name" value="Glycosidase"/>
</dbReference>
<dbReference type="InterPro" id="IPR012142">
    <property type="entry name" value="Trp_2-mOase"/>
</dbReference>
<dbReference type="PANTHER" id="PTHR10742:SF342">
    <property type="entry name" value="AMINE OXIDASE"/>
    <property type="match status" value="1"/>
</dbReference>
<dbReference type="PANTHER" id="PTHR10742">
    <property type="entry name" value="FLAVIN MONOAMINE OXIDASE"/>
    <property type="match status" value="1"/>
</dbReference>
<dbReference type="Pfam" id="PF01593">
    <property type="entry name" value="Amino_oxidase"/>
    <property type="match status" value="1"/>
</dbReference>
<dbReference type="Pfam" id="PF02027">
    <property type="entry name" value="RolB_RolC"/>
    <property type="match status" value="1"/>
</dbReference>
<dbReference type="PIRSF" id="PIRSF000319">
    <property type="entry name" value="Trp_2-mono_O2ase"/>
    <property type="match status" value="1"/>
</dbReference>
<dbReference type="PRINTS" id="PR00419">
    <property type="entry name" value="ADXRDTASE"/>
</dbReference>
<dbReference type="SUPFAM" id="SSF54373">
    <property type="entry name" value="FAD-linked reductases, C-terminal domain"/>
    <property type="match status" value="1"/>
</dbReference>
<dbReference type="SUPFAM" id="SSF51905">
    <property type="entry name" value="FAD/NAD(P)-binding domain"/>
    <property type="match status" value="1"/>
</dbReference>
<protein>
    <recommendedName>
        <fullName>Tryptophan 2-monooxygenase</fullName>
        <ecNumber>1.13.12.3</ecNumber>
    </recommendedName>
</protein>
<organism>
    <name type="scientific">Rhizobium rhizogenes</name>
    <name type="common">Agrobacterium rhizogenes</name>
    <dbReference type="NCBI Taxonomy" id="359"/>
    <lineage>
        <taxon>Bacteria</taxon>
        <taxon>Pseudomonadati</taxon>
        <taxon>Pseudomonadota</taxon>
        <taxon>Alphaproteobacteria</taxon>
        <taxon>Hyphomicrobiales</taxon>
        <taxon>Rhizobiaceae</taxon>
        <taxon>Rhizobium/Agrobacterium group</taxon>
        <taxon>Rhizobium</taxon>
    </lineage>
</organism>